<name>ZBT24_HUMAN</name>
<feature type="chain" id="PRO_0000047734" description="Zinc finger and BTB domain-containing protein 24">
    <location>
        <begin position="1"/>
        <end position="697"/>
    </location>
</feature>
<feature type="domain" description="BTB" evidence="2">
    <location>
        <begin position="10"/>
        <end position="133"/>
    </location>
</feature>
<feature type="DNA-binding region" description="A.T hook">
    <location>
        <begin position="159"/>
        <end position="171"/>
    </location>
</feature>
<feature type="zinc finger region" description="C2H2-type 1" evidence="3">
    <location>
        <begin position="294"/>
        <end position="316"/>
    </location>
</feature>
<feature type="zinc finger region" description="C2H2-type 2" evidence="3">
    <location>
        <begin position="322"/>
        <end position="344"/>
    </location>
</feature>
<feature type="zinc finger region" description="C2H2-type 3" evidence="3">
    <location>
        <begin position="350"/>
        <end position="372"/>
    </location>
</feature>
<feature type="zinc finger region" description="C2H2-type 4" evidence="3">
    <location>
        <begin position="378"/>
        <end position="400"/>
    </location>
</feature>
<feature type="zinc finger region" description="C2H2-type 5" evidence="3">
    <location>
        <begin position="406"/>
        <end position="428"/>
    </location>
</feature>
<feature type="zinc finger region" description="C2H2-type 6" evidence="3">
    <location>
        <begin position="434"/>
        <end position="456"/>
    </location>
</feature>
<feature type="zinc finger region" description="C2H2-type 7" evidence="3">
    <location>
        <begin position="462"/>
        <end position="484"/>
    </location>
</feature>
<feature type="zinc finger region" description="C2H2-type 8" evidence="3">
    <location>
        <begin position="490"/>
        <end position="512"/>
    </location>
</feature>
<feature type="region of interest" description="Disordered" evidence="4">
    <location>
        <begin position="131"/>
        <end position="176"/>
    </location>
</feature>
<feature type="region of interest" description="Disordered" evidence="4">
    <location>
        <begin position="209"/>
        <end position="254"/>
    </location>
</feature>
<feature type="region of interest" description="Disordered" evidence="4">
    <location>
        <begin position="652"/>
        <end position="697"/>
    </location>
</feature>
<feature type="compositionally biased region" description="Polar residues" evidence="4">
    <location>
        <begin position="131"/>
        <end position="142"/>
    </location>
</feature>
<feature type="compositionally biased region" description="Basic and acidic residues" evidence="4">
    <location>
        <begin position="212"/>
        <end position="245"/>
    </location>
</feature>
<feature type="compositionally biased region" description="Pro residues" evidence="4">
    <location>
        <begin position="677"/>
        <end position="690"/>
    </location>
</feature>
<feature type="splice variant" id="VSP_016221" description="In isoform 2." evidence="7">
    <original>ERPFKCNECGKGFAQ</original>
    <variation>NDVFKADCSVLQNWE</variation>
    <location>
        <begin position="319"/>
        <end position="333"/>
    </location>
</feature>
<feature type="splice variant" id="VSP_016222" description="In isoform 2." evidence="7">
    <location>
        <begin position="334"/>
        <end position="697"/>
    </location>
</feature>
<feature type="sequence variant" id="VAR_065846" description="In ICF2; dbSNP:rs387907105." evidence="5">
    <original>C</original>
    <variation>G</variation>
    <location>
        <position position="408"/>
    </location>
</feature>
<feature type="sequence variant" id="VAR_057458" description="In dbSNP:rs2232448.">
    <original>A</original>
    <variation>T</variation>
    <location>
        <position position="518"/>
    </location>
</feature>
<feature type="sequence conflict" description="In Ref. 1; BAA23713." evidence="8" ref="1">
    <original>S</original>
    <variation>P</variation>
    <location>
        <position position="151"/>
    </location>
</feature>
<dbReference type="EMBL" id="AB007901">
    <property type="protein sequence ID" value="BAA23713.2"/>
    <property type="status" value="ALT_INIT"/>
    <property type="molecule type" value="mRNA"/>
</dbReference>
<dbReference type="EMBL" id="AL109947">
    <property type="status" value="NOT_ANNOTATED_CDS"/>
    <property type="molecule type" value="Genomic_DNA"/>
</dbReference>
<dbReference type="EMBL" id="BC036731">
    <property type="protein sequence ID" value="AAH36731.1"/>
    <property type="molecule type" value="mRNA"/>
</dbReference>
<dbReference type="EMBL" id="BC117374">
    <property type="protein sequence ID" value="AAI17375.1"/>
    <property type="molecule type" value="mRNA"/>
</dbReference>
<dbReference type="EMBL" id="BC117376">
    <property type="protein sequence ID" value="AAI17377.1"/>
    <property type="molecule type" value="mRNA"/>
</dbReference>
<dbReference type="CCDS" id="CCDS34509.1">
    <molecule id="O43167-1"/>
</dbReference>
<dbReference type="RefSeq" id="NP_001157785.1">
    <molecule id="O43167-2"/>
    <property type="nucleotide sequence ID" value="NM_001164313.2"/>
</dbReference>
<dbReference type="RefSeq" id="NP_055612.2">
    <molecule id="O43167-1"/>
    <property type="nucleotide sequence ID" value="NM_014797.3"/>
</dbReference>
<dbReference type="SMR" id="O43167"/>
<dbReference type="BioGRID" id="115177">
    <property type="interactions" value="161"/>
</dbReference>
<dbReference type="FunCoup" id="O43167">
    <property type="interactions" value="1807"/>
</dbReference>
<dbReference type="IntAct" id="O43167">
    <property type="interactions" value="149"/>
</dbReference>
<dbReference type="MINT" id="O43167"/>
<dbReference type="STRING" id="9606.ENSP00000230122"/>
<dbReference type="ChEMBL" id="CHEMBL5069371"/>
<dbReference type="GlyGen" id="O43167">
    <property type="glycosylation" value="1 site"/>
</dbReference>
<dbReference type="iPTMnet" id="O43167"/>
<dbReference type="PhosphoSitePlus" id="O43167"/>
<dbReference type="BioMuta" id="ZBTB24"/>
<dbReference type="jPOST" id="O43167"/>
<dbReference type="MassIVE" id="O43167"/>
<dbReference type="PaxDb" id="9606-ENSP00000230122"/>
<dbReference type="PeptideAtlas" id="O43167"/>
<dbReference type="ProteomicsDB" id="48785">
    <molecule id="O43167-1"/>
</dbReference>
<dbReference type="ProteomicsDB" id="48786">
    <molecule id="O43167-2"/>
</dbReference>
<dbReference type="Pumba" id="O43167"/>
<dbReference type="ABCD" id="O43167">
    <property type="antibodies" value="5 sequenced antibodies"/>
</dbReference>
<dbReference type="Antibodypedia" id="56124">
    <property type="antibodies" value="118 antibodies from 24 providers"/>
</dbReference>
<dbReference type="DNASU" id="9841"/>
<dbReference type="Ensembl" id="ENST00000230122.4">
    <molecule id="O43167-1"/>
    <property type="protein sequence ID" value="ENSP00000230122.4"/>
    <property type="gene ID" value="ENSG00000112365.6"/>
</dbReference>
<dbReference type="Ensembl" id="ENST00000698516.1">
    <molecule id="O43167-1"/>
    <property type="protein sequence ID" value="ENSP00000513766.1"/>
    <property type="gene ID" value="ENSG00000112365.6"/>
</dbReference>
<dbReference type="GeneID" id="9841"/>
<dbReference type="KEGG" id="hsa:9841"/>
<dbReference type="MANE-Select" id="ENST00000230122.4">
    <property type="protein sequence ID" value="ENSP00000230122.4"/>
    <property type="RefSeq nucleotide sequence ID" value="NM_014797.3"/>
    <property type="RefSeq protein sequence ID" value="NP_055612.2"/>
</dbReference>
<dbReference type="UCSC" id="uc003ptl.2">
    <molecule id="O43167-1"/>
    <property type="organism name" value="human"/>
</dbReference>
<dbReference type="AGR" id="HGNC:21143"/>
<dbReference type="CTD" id="9841"/>
<dbReference type="DisGeNET" id="9841"/>
<dbReference type="GeneCards" id="ZBTB24"/>
<dbReference type="HGNC" id="HGNC:21143">
    <property type="gene designation" value="ZBTB24"/>
</dbReference>
<dbReference type="HPA" id="ENSG00000112365">
    <property type="expression patterns" value="Tissue enhanced (bone)"/>
</dbReference>
<dbReference type="MalaCards" id="ZBTB24"/>
<dbReference type="MIM" id="614064">
    <property type="type" value="gene"/>
</dbReference>
<dbReference type="MIM" id="614069">
    <property type="type" value="phenotype"/>
</dbReference>
<dbReference type="neXtProt" id="NX_O43167"/>
<dbReference type="OpenTargets" id="ENSG00000112365"/>
<dbReference type="Orphanet" id="2268">
    <property type="disease" value="ICF syndrome"/>
</dbReference>
<dbReference type="PharmGKB" id="PA134904966"/>
<dbReference type="VEuPathDB" id="HostDB:ENSG00000112365"/>
<dbReference type="eggNOG" id="KOG1721">
    <property type="taxonomic scope" value="Eukaryota"/>
</dbReference>
<dbReference type="GeneTree" id="ENSGT00940000159373"/>
<dbReference type="HOGENOM" id="CLU_024445_0_0_1"/>
<dbReference type="InParanoid" id="O43167"/>
<dbReference type="OMA" id="SNHHIQG"/>
<dbReference type="OrthoDB" id="6365676at2759"/>
<dbReference type="PAN-GO" id="O43167">
    <property type="GO annotations" value="3 GO annotations based on evolutionary models"/>
</dbReference>
<dbReference type="PhylomeDB" id="O43167"/>
<dbReference type="TreeFam" id="TF332049"/>
<dbReference type="PathwayCommons" id="O43167"/>
<dbReference type="SignaLink" id="O43167"/>
<dbReference type="BioGRID-ORCS" id="9841">
    <property type="hits" value="19 hits in 1213 CRISPR screens"/>
</dbReference>
<dbReference type="ChiTaRS" id="ZBTB24">
    <property type="organism name" value="human"/>
</dbReference>
<dbReference type="GenomeRNAi" id="9841"/>
<dbReference type="Pharos" id="O43167">
    <property type="development level" value="Tbio"/>
</dbReference>
<dbReference type="PRO" id="PR:O43167"/>
<dbReference type="Proteomes" id="UP000005640">
    <property type="component" value="Chromosome 6"/>
</dbReference>
<dbReference type="RNAct" id="O43167">
    <property type="molecule type" value="protein"/>
</dbReference>
<dbReference type="Bgee" id="ENSG00000112365">
    <property type="expression patterns" value="Expressed in endothelial cell and 174 other cell types or tissues"/>
</dbReference>
<dbReference type="GO" id="GO:0005634">
    <property type="term" value="C:nucleus"/>
    <property type="evidence" value="ECO:0007669"/>
    <property type="project" value="UniProtKB-SubCell"/>
</dbReference>
<dbReference type="GO" id="GO:0003700">
    <property type="term" value="F:DNA-binding transcription factor activity"/>
    <property type="evidence" value="ECO:0000318"/>
    <property type="project" value="GO_Central"/>
</dbReference>
<dbReference type="GO" id="GO:0000978">
    <property type="term" value="F:RNA polymerase II cis-regulatory region sequence-specific DNA binding"/>
    <property type="evidence" value="ECO:0000318"/>
    <property type="project" value="GO_Central"/>
</dbReference>
<dbReference type="GO" id="GO:0008270">
    <property type="term" value="F:zinc ion binding"/>
    <property type="evidence" value="ECO:0007669"/>
    <property type="project" value="UniProtKB-KW"/>
</dbReference>
<dbReference type="GO" id="GO:0002244">
    <property type="term" value="P:hematopoietic progenitor cell differentiation"/>
    <property type="evidence" value="ECO:0007669"/>
    <property type="project" value="Ensembl"/>
</dbReference>
<dbReference type="GO" id="GO:0006357">
    <property type="term" value="P:regulation of transcription by RNA polymerase II"/>
    <property type="evidence" value="ECO:0000318"/>
    <property type="project" value="GO_Central"/>
</dbReference>
<dbReference type="CDD" id="cd18212">
    <property type="entry name" value="BTB_POZ_ZBTB24_ZNF450"/>
    <property type="match status" value="1"/>
</dbReference>
<dbReference type="FunFam" id="3.30.160.60:FF:000472">
    <property type="entry name" value="myoneurin isoform X1"/>
    <property type="match status" value="1"/>
</dbReference>
<dbReference type="FunFam" id="3.30.160.60:FF:001480">
    <property type="entry name" value="Si:cabz01071911.3"/>
    <property type="match status" value="1"/>
</dbReference>
<dbReference type="FunFam" id="3.30.160.60:FF:000692">
    <property type="entry name" value="Zinc finger and BTB domain containing 24"/>
    <property type="match status" value="1"/>
</dbReference>
<dbReference type="FunFam" id="3.30.160.60:FF:000267">
    <property type="entry name" value="Zinc finger and BTB domain-containing 49"/>
    <property type="match status" value="1"/>
</dbReference>
<dbReference type="FunFam" id="3.30.160.60:FF:001125">
    <property type="entry name" value="Zinc finger and BTB domain-containing protein 24"/>
    <property type="match status" value="1"/>
</dbReference>
<dbReference type="FunFam" id="3.30.710.10:FF:000082">
    <property type="entry name" value="zinc finger and BTB domain-containing protein 24 isoform X1"/>
    <property type="match status" value="1"/>
</dbReference>
<dbReference type="FunFam" id="3.30.160.60:FF:001506">
    <property type="entry name" value="Zinc finger protein"/>
    <property type="match status" value="1"/>
</dbReference>
<dbReference type="FunFam" id="3.30.160.60:FF:000759">
    <property type="entry name" value="zinc finger protein 16"/>
    <property type="match status" value="1"/>
</dbReference>
<dbReference type="FunFam" id="3.30.160.60:FF:000624">
    <property type="entry name" value="zinc finger protein 697"/>
    <property type="match status" value="1"/>
</dbReference>
<dbReference type="Gene3D" id="3.30.160.60">
    <property type="entry name" value="Classic Zinc Finger"/>
    <property type="match status" value="8"/>
</dbReference>
<dbReference type="Gene3D" id="3.30.710.10">
    <property type="entry name" value="Potassium Channel Kv1.1, Chain A"/>
    <property type="match status" value="1"/>
</dbReference>
<dbReference type="InterPro" id="IPR000210">
    <property type="entry name" value="BTB/POZ_dom"/>
</dbReference>
<dbReference type="InterPro" id="IPR011333">
    <property type="entry name" value="SKP1/BTB/POZ_sf"/>
</dbReference>
<dbReference type="InterPro" id="IPR036236">
    <property type="entry name" value="Znf_C2H2_sf"/>
</dbReference>
<dbReference type="InterPro" id="IPR013087">
    <property type="entry name" value="Znf_C2H2_type"/>
</dbReference>
<dbReference type="InterPro" id="IPR050457">
    <property type="entry name" value="ZnFinger_BTB_dom_contain"/>
</dbReference>
<dbReference type="PANTHER" id="PTHR46105">
    <property type="entry name" value="AGAP004733-PA"/>
    <property type="match status" value="1"/>
</dbReference>
<dbReference type="PANTHER" id="PTHR46105:SF31">
    <property type="entry name" value="LOW QUALITY PROTEIN: ZINC FINGER PROTEIN 721-RELATED"/>
    <property type="match status" value="1"/>
</dbReference>
<dbReference type="Pfam" id="PF00651">
    <property type="entry name" value="BTB"/>
    <property type="match status" value="1"/>
</dbReference>
<dbReference type="Pfam" id="PF00096">
    <property type="entry name" value="zf-C2H2"/>
    <property type="match status" value="8"/>
</dbReference>
<dbReference type="SMART" id="SM00225">
    <property type="entry name" value="BTB"/>
    <property type="match status" value="1"/>
</dbReference>
<dbReference type="SMART" id="SM00355">
    <property type="entry name" value="ZnF_C2H2"/>
    <property type="match status" value="8"/>
</dbReference>
<dbReference type="SUPFAM" id="SSF57667">
    <property type="entry name" value="beta-beta-alpha zinc fingers"/>
    <property type="match status" value="4"/>
</dbReference>
<dbReference type="SUPFAM" id="SSF54695">
    <property type="entry name" value="POZ domain"/>
    <property type="match status" value="1"/>
</dbReference>
<dbReference type="PROSITE" id="PS50097">
    <property type="entry name" value="BTB"/>
    <property type="match status" value="1"/>
</dbReference>
<dbReference type="PROSITE" id="PS00028">
    <property type="entry name" value="ZINC_FINGER_C2H2_1"/>
    <property type="match status" value="8"/>
</dbReference>
<dbReference type="PROSITE" id="PS50157">
    <property type="entry name" value="ZINC_FINGER_C2H2_2"/>
    <property type="match status" value="8"/>
</dbReference>
<reference key="1">
    <citation type="journal article" date="1997" name="DNA Res.">
        <title>Prediction of the coding sequences of unidentified human genes. VIII. 78 new cDNA clones from brain which code for large proteins in vitro.</title>
        <authorList>
            <person name="Ishikawa K."/>
            <person name="Nagase T."/>
            <person name="Nakajima D."/>
            <person name="Seki N."/>
            <person name="Ohira M."/>
            <person name="Miyajima N."/>
            <person name="Tanaka A."/>
            <person name="Kotani H."/>
            <person name="Nomura N."/>
            <person name="Ohara O."/>
        </authorList>
    </citation>
    <scope>NUCLEOTIDE SEQUENCE [LARGE SCALE MRNA] (ISOFORM 1)</scope>
    <source>
        <tissue>Brain</tissue>
    </source>
</reference>
<reference key="2">
    <citation type="journal article" date="2002" name="DNA Res.">
        <title>Construction of expression-ready cDNA clones for KIAA genes: manual curation of 330 KIAA cDNA clones.</title>
        <authorList>
            <person name="Nakajima D."/>
            <person name="Okazaki N."/>
            <person name="Yamakawa H."/>
            <person name="Kikuno R."/>
            <person name="Ohara O."/>
            <person name="Nagase T."/>
        </authorList>
    </citation>
    <scope>SEQUENCE REVISION</scope>
</reference>
<reference key="3">
    <citation type="journal article" date="2003" name="Nature">
        <title>The DNA sequence and analysis of human chromosome 6.</title>
        <authorList>
            <person name="Mungall A.J."/>
            <person name="Palmer S.A."/>
            <person name="Sims S.K."/>
            <person name="Edwards C.A."/>
            <person name="Ashurst J.L."/>
            <person name="Wilming L."/>
            <person name="Jones M.C."/>
            <person name="Horton R."/>
            <person name="Hunt S.E."/>
            <person name="Scott C.E."/>
            <person name="Gilbert J.G.R."/>
            <person name="Clamp M.E."/>
            <person name="Bethel G."/>
            <person name="Milne S."/>
            <person name="Ainscough R."/>
            <person name="Almeida J.P."/>
            <person name="Ambrose K.D."/>
            <person name="Andrews T.D."/>
            <person name="Ashwell R.I.S."/>
            <person name="Babbage A.K."/>
            <person name="Bagguley C.L."/>
            <person name="Bailey J."/>
            <person name="Banerjee R."/>
            <person name="Barker D.J."/>
            <person name="Barlow K.F."/>
            <person name="Bates K."/>
            <person name="Beare D.M."/>
            <person name="Beasley H."/>
            <person name="Beasley O."/>
            <person name="Bird C.P."/>
            <person name="Blakey S.E."/>
            <person name="Bray-Allen S."/>
            <person name="Brook J."/>
            <person name="Brown A.J."/>
            <person name="Brown J.Y."/>
            <person name="Burford D.C."/>
            <person name="Burrill W."/>
            <person name="Burton J."/>
            <person name="Carder C."/>
            <person name="Carter N.P."/>
            <person name="Chapman J.C."/>
            <person name="Clark S.Y."/>
            <person name="Clark G."/>
            <person name="Clee C.M."/>
            <person name="Clegg S."/>
            <person name="Cobley V."/>
            <person name="Collier R.E."/>
            <person name="Collins J.E."/>
            <person name="Colman L.K."/>
            <person name="Corby N.R."/>
            <person name="Coville G.J."/>
            <person name="Culley K.M."/>
            <person name="Dhami P."/>
            <person name="Davies J."/>
            <person name="Dunn M."/>
            <person name="Earthrowl M.E."/>
            <person name="Ellington A.E."/>
            <person name="Evans K.A."/>
            <person name="Faulkner L."/>
            <person name="Francis M.D."/>
            <person name="Frankish A."/>
            <person name="Frankland J."/>
            <person name="French L."/>
            <person name="Garner P."/>
            <person name="Garnett J."/>
            <person name="Ghori M.J."/>
            <person name="Gilby L.M."/>
            <person name="Gillson C.J."/>
            <person name="Glithero R.J."/>
            <person name="Grafham D.V."/>
            <person name="Grant M."/>
            <person name="Gribble S."/>
            <person name="Griffiths C."/>
            <person name="Griffiths M.N.D."/>
            <person name="Hall R."/>
            <person name="Halls K.S."/>
            <person name="Hammond S."/>
            <person name="Harley J.L."/>
            <person name="Hart E.A."/>
            <person name="Heath P.D."/>
            <person name="Heathcott R."/>
            <person name="Holmes S.J."/>
            <person name="Howden P.J."/>
            <person name="Howe K.L."/>
            <person name="Howell G.R."/>
            <person name="Huckle E."/>
            <person name="Humphray S.J."/>
            <person name="Humphries M.D."/>
            <person name="Hunt A.R."/>
            <person name="Johnson C.M."/>
            <person name="Joy A.A."/>
            <person name="Kay M."/>
            <person name="Keenan S.J."/>
            <person name="Kimberley A.M."/>
            <person name="King A."/>
            <person name="Laird G.K."/>
            <person name="Langford C."/>
            <person name="Lawlor S."/>
            <person name="Leongamornlert D.A."/>
            <person name="Leversha M."/>
            <person name="Lloyd C.R."/>
            <person name="Lloyd D.M."/>
            <person name="Loveland J.E."/>
            <person name="Lovell J."/>
            <person name="Martin S."/>
            <person name="Mashreghi-Mohammadi M."/>
            <person name="Maslen G.L."/>
            <person name="Matthews L."/>
            <person name="McCann O.T."/>
            <person name="McLaren S.J."/>
            <person name="McLay K."/>
            <person name="McMurray A."/>
            <person name="Moore M.J.F."/>
            <person name="Mullikin J.C."/>
            <person name="Niblett D."/>
            <person name="Nickerson T."/>
            <person name="Novik K.L."/>
            <person name="Oliver K."/>
            <person name="Overton-Larty E.K."/>
            <person name="Parker A."/>
            <person name="Patel R."/>
            <person name="Pearce A.V."/>
            <person name="Peck A.I."/>
            <person name="Phillimore B.J.C.T."/>
            <person name="Phillips S."/>
            <person name="Plumb R.W."/>
            <person name="Porter K.M."/>
            <person name="Ramsey Y."/>
            <person name="Ranby S.A."/>
            <person name="Rice C.M."/>
            <person name="Ross M.T."/>
            <person name="Searle S.M."/>
            <person name="Sehra H.K."/>
            <person name="Sheridan E."/>
            <person name="Skuce C.D."/>
            <person name="Smith S."/>
            <person name="Smith M."/>
            <person name="Spraggon L."/>
            <person name="Squares S.L."/>
            <person name="Steward C.A."/>
            <person name="Sycamore N."/>
            <person name="Tamlyn-Hall G."/>
            <person name="Tester J."/>
            <person name="Theaker A.J."/>
            <person name="Thomas D.W."/>
            <person name="Thorpe A."/>
            <person name="Tracey A."/>
            <person name="Tromans A."/>
            <person name="Tubby B."/>
            <person name="Wall M."/>
            <person name="Wallis J.M."/>
            <person name="West A.P."/>
            <person name="White S.S."/>
            <person name="Whitehead S.L."/>
            <person name="Whittaker H."/>
            <person name="Wild A."/>
            <person name="Willey D.J."/>
            <person name="Wilmer T.E."/>
            <person name="Wood J.M."/>
            <person name="Wray P.W."/>
            <person name="Wyatt J.C."/>
            <person name="Young L."/>
            <person name="Younger R.M."/>
            <person name="Bentley D.R."/>
            <person name="Coulson A."/>
            <person name="Durbin R.M."/>
            <person name="Hubbard T."/>
            <person name="Sulston J.E."/>
            <person name="Dunham I."/>
            <person name="Rogers J."/>
            <person name="Beck S."/>
        </authorList>
    </citation>
    <scope>NUCLEOTIDE SEQUENCE [LARGE SCALE GENOMIC DNA]</scope>
</reference>
<reference key="4">
    <citation type="journal article" date="2004" name="Genome Res.">
        <title>The status, quality, and expansion of the NIH full-length cDNA project: the Mammalian Gene Collection (MGC).</title>
        <authorList>
            <consortium name="The MGC Project Team"/>
        </authorList>
    </citation>
    <scope>NUCLEOTIDE SEQUENCE [LARGE SCALE MRNA] (ISOFORMS 1 AND 2)</scope>
    <source>
        <tissue>Brain</tissue>
        <tissue>Eye</tissue>
    </source>
</reference>
<reference key="5">
    <citation type="journal article" date="2020" name="Am. J. Hum. Genet.">
        <title>Gain-of-function MN1 truncation variants cause a recognizable syndrome with craniofacial and brain abnormalities.</title>
        <authorList>
            <person name="Miyake N."/>
            <person name="Takahashi H."/>
            <person name="Nakamura K."/>
            <person name="Isidor B."/>
            <person name="Hiraki Y."/>
            <person name="Koshimizu E."/>
            <person name="Shiina M."/>
            <person name="Sasaki K."/>
            <person name="Suzuki H."/>
            <person name="Abe R."/>
            <person name="Kimura Y."/>
            <person name="Akiyama T."/>
            <person name="Tomizawa S.I."/>
            <person name="Hirose T."/>
            <person name="Hamanaka K."/>
            <person name="Miyatake S."/>
            <person name="Mitsuhashi S."/>
            <person name="Mizuguchi T."/>
            <person name="Takata A."/>
            <person name="Obo K."/>
            <person name="Kato M."/>
            <person name="Ogata K."/>
            <person name="Matsumoto N."/>
        </authorList>
    </citation>
    <scope>INTERACTION WITH MN1</scope>
</reference>
<reference key="6">
    <citation type="journal article" date="2011" name="Am. J. Hum. Genet.">
        <title>Mutations in ZBTB24 are associated with immunodeficiency, centromeric instability, and facial anomalies syndrome type 2.</title>
        <authorList>
            <person name="de Greef J.C."/>
            <person name="Wang J."/>
            <person name="Balog J."/>
            <person name="den Dunnen J.T."/>
            <person name="Frants R.R."/>
            <person name="Straasheijm K.R."/>
            <person name="Aytekin C."/>
            <person name="van der Burg M."/>
            <person name="Duprez L."/>
            <person name="Ferster A."/>
            <person name="Gennery A.R."/>
            <person name="Gimelli G."/>
            <person name="Reisli I."/>
            <person name="Schuetz C."/>
            <person name="Schulz A."/>
            <person name="Smeets D.F."/>
            <person name="Sznajer Y."/>
            <person name="Wijmenga C."/>
            <person name="van Eggermond M.C."/>
            <person name="van Ostaijen-Ten Dam M.M."/>
            <person name="Lankester A.C."/>
            <person name="van Tol M.J."/>
            <person name="van den Elsen P.J."/>
            <person name="Weemaes C.M."/>
            <person name="van der Maarel S.M."/>
        </authorList>
    </citation>
    <scope>VARIANT ICF2 GLY-408</scope>
    <scope>TISSUE SPECIFICITY</scope>
    <scope>DEVELOPMENTAL STAGE</scope>
</reference>
<organism>
    <name type="scientific">Homo sapiens</name>
    <name type="common">Human</name>
    <dbReference type="NCBI Taxonomy" id="9606"/>
    <lineage>
        <taxon>Eukaryota</taxon>
        <taxon>Metazoa</taxon>
        <taxon>Chordata</taxon>
        <taxon>Craniata</taxon>
        <taxon>Vertebrata</taxon>
        <taxon>Euteleostomi</taxon>
        <taxon>Mammalia</taxon>
        <taxon>Eutheria</taxon>
        <taxon>Euarchontoglires</taxon>
        <taxon>Primates</taxon>
        <taxon>Haplorrhini</taxon>
        <taxon>Catarrhini</taxon>
        <taxon>Hominidae</taxon>
        <taxon>Homo</taxon>
    </lineage>
</organism>
<accession>O43167</accession>
<accession>Q17RC6</accession>
<accession>Q5TED5</accession>
<accession>Q8N455</accession>
<evidence type="ECO:0000250" key="1"/>
<evidence type="ECO:0000255" key="2">
    <source>
        <dbReference type="PROSITE-ProRule" id="PRU00037"/>
    </source>
</evidence>
<evidence type="ECO:0000255" key="3">
    <source>
        <dbReference type="PROSITE-ProRule" id="PRU00042"/>
    </source>
</evidence>
<evidence type="ECO:0000256" key="4">
    <source>
        <dbReference type="SAM" id="MobiDB-lite"/>
    </source>
</evidence>
<evidence type="ECO:0000269" key="5">
    <source>
    </source>
</evidence>
<evidence type="ECO:0000269" key="6">
    <source>
    </source>
</evidence>
<evidence type="ECO:0000303" key="7">
    <source>
    </source>
</evidence>
<evidence type="ECO:0000305" key="8"/>
<sequence length="697" mass="78282">MAETSPEPSGQLVVHSDAHSDTVLASFEDQRKKGFLCDITLIVENVHFRAHKALLAASSEYFSMMFAEEGEIGQSIYMLEGMVADTFGILLEFIYTGYLHASEKSTEQILATAQFLKVYDLVKAYTDFQNNHSSPKPTTLNTAGAPVVVISNKKNDPPKRKRGRPKKVNTLQEEKSELAAEEEIQLRVNNSVQNRQNFVVKGDSGVLNEQIAAKEKEESEPTCEPSREEEMPVEKDENYDPKTEDGQASQSRYSKRRIWRSVKLKDYKLVGDQEDHGSAKRICGRRKRPGGPEARCKDCGKVFKYNHFLAIHQRSHTGERPFKCNECGKGFAQKHSLQVHTRMHTGERPYTCTVCSKALTTKHSLLEHMSLHSGQKSFTCDQCGKYFSQNRQLKSHYRVHTGHSLPECKDCHRKFMDVSQLKKHLRTHTGEKPFTCEICGKSFTAKSSLQTHIRIHRGEKPYSCGICGKSFSDSSAKRRHCILHTGKKPFSCPECNLQFARLDNLKAHLKIHSKEKHASDASSISGSSNTEEVRNILQLQPYQLSTSGEQEIQLLVTDSVHNINFMPGPSQGISIVTAESSQNMTADQAANLTLLTQQPEQLQNLILSAQQEQTEHIQSLNMIESQMGPSQTEPVHVITLSKETLEHLHAHQEQTEELHLATSTSDPAQHLQLTQEPGPPPPTHHVPQPTPLGQEQS</sequence>
<protein>
    <recommendedName>
        <fullName>Zinc finger and BTB domain-containing protein 24</fullName>
    </recommendedName>
    <alternativeName>
        <fullName>Zinc finger protein 450</fullName>
    </alternativeName>
</protein>
<keyword id="KW-0025">Alternative splicing</keyword>
<keyword id="KW-0225">Disease variant</keyword>
<keyword id="KW-0238">DNA-binding</keyword>
<keyword id="KW-0479">Metal-binding</keyword>
<keyword id="KW-0539">Nucleus</keyword>
<keyword id="KW-1267">Proteomics identification</keyword>
<keyword id="KW-1185">Reference proteome</keyword>
<keyword id="KW-0677">Repeat</keyword>
<keyword id="KW-0804">Transcription</keyword>
<keyword id="KW-0805">Transcription regulation</keyword>
<keyword id="KW-0862">Zinc</keyword>
<keyword id="KW-0863">Zinc-finger</keyword>
<comment type="function">
    <text evidence="1">May be involved in BMP2-induced transcription.</text>
</comment>
<comment type="subunit">
    <text evidence="6">Interacts with MN1.</text>
</comment>
<comment type="interaction">
    <interactant intactId="EBI-744471">
        <id>O43167</id>
    </interactant>
    <interactant intactId="EBI-1642333">
        <id>Q9BYV9</id>
        <label>BACH2</label>
    </interactant>
    <organismsDiffer>false</organismsDiffer>
    <experiments>4</experiments>
</comment>
<comment type="interaction">
    <interactant intactId="EBI-744471">
        <id>O43167</id>
    </interactant>
    <interactant intactId="EBI-10183342">
        <id>Q9H165-2</id>
        <label>BCL11A</label>
    </interactant>
    <organismsDiffer>false</organismsDiffer>
    <experiments>3</experiments>
</comment>
<comment type="interaction">
    <interactant intactId="EBI-744471">
        <id>O43167</id>
    </interactant>
    <interactant intactId="EBI-2548012">
        <id>Q9H2G9</id>
        <label>BLZF1</label>
    </interactant>
    <organismsDiffer>false</organismsDiffer>
    <experiments>9</experiments>
</comment>
<comment type="interaction">
    <interactant intactId="EBI-744471">
        <id>O43167</id>
    </interactant>
    <interactant intactId="EBI-748961">
        <id>O95273</id>
        <label>CCNDBP1</label>
    </interactant>
    <organismsDiffer>false</organismsDiffer>
    <experiments>3</experiments>
</comment>
<comment type="interaction">
    <interactant intactId="EBI-744471">
        <id>O43167</id>
    </interactant>
    <interactant intactId="EBI-9250559">
        <id>P32320</id>
        <label>CDA</label>
    </interactant>
    <organismsDiffer>false</organismsDiffer>
    <experiments>6</experiments>
</comment>
<comment type="interaction">
    <interactant intactId="EBI-744471">
        <id>O43167</id>
    </interactant>
    <interactant intactId="EBI-739624">
        <id>Q8NHQ1</id>
        <label>CEP70</label>
    </interactant>
    <organismsDiffer>false</organismsDiffer>
    <experiments>6</experiments>
</comment>
<comment type="interaction">
    <interactant intactId="EBI-744471">
        <id>O43167</id>
    </interactant>
    <interactant intactId="EBI-742887">
        <id>Q8TAP6</id>
        <label>CEP76</label>
    </interactant>
    <organismsDiffer>false</organismsDiffer>
    <experiments>6</experiments>
</comment>
<comment type="interaction">
    <interactant intactId="EBI-744471">
        <id>O43167</id>
    </interactant>
    <interactant intactId="EBI-11062258">
        <id>Q8NEL9-2</id>
        <label>DDHD1</label>
    </interactant>
    <organismsDiffer>false</organismsDiffer>
    <experiments>3</experiments>
</comment>
<comment type="interaction">
    <interactant intactId="EBI-744471">
        <id>O43167</id>
    </interactant>
    <interactant intactId="EBI-739789">
        <id>Q92997</id>
        <label>DVL3</label>
    </interactant>
    <organismsDiffer>false</organismsDiffer>
    <experiments>3</experiments>
</comment>
<comment type="interaction">
    <interactant intactId="EBI-744471">
        <id>O43167</id>
    </interactant>
    <interactant intactId="EBI-11977403">
        <id>A0A0C3SFZ9</id>
        <label>FCHO1</label>
    </interactant>
    <organismsDiffer>false</organismsDiffer>
    <experiments>3</experiments>
</comment>
<comment type="interaction">
    <interactant intactId="EBI-744471">
        <id>O43167</id>
    </interactant>
    <interactant intactId="EBI-2548508">
        <id>Q96IK5</id>
        <label>GMCL1</label>
    </interactant>
    <organismsDiffer>false</organismsDiffer>
    <experiments>3</experiments>
</comment>
<comment type="interaction">
    <interactant intactId="EBI-744471">
        <id>O43167</id>
    </interactant>
    <interactant intactId="EBI-5916454">
        <id>A6NEM1</id>
        <label>GOLGA6L9</label>
    </interactant>
    <organismsDiffer>false</organismsDiffer>
    <experiments>3</experiments>
</comment>
<comment type="interaction">
    <interactant intactId="EBI-744471">
        <id>O43167</id>
    </interactant>
    <interactant intactId="EBI-2549423">
        <id>Q6NT76</id>
        <label>HMBOX1</label>
    </interactant>
    <organismsDiffer>false</organismsDiffer>
    <experiments>3</experiments>
</comment>
<comment type="interaction">
    <interactant intactId="EBI-744471">
        <id>O43167</id>
    </interactant>
    <interactant intactId="EBI-2796400">
        <id>Q9UIH9</id>
        <label>KLF15</label>
    </interactant>
    <organismsDiffer>false</organismsDiffer>
    <experiments>10</experiments>
</comment>
<comment type="interaction">
    <interactant intactId="EBI-744471">
        <id>O43167</id>
    </interactant>
    <interactant intactId="EBI-358297">
        <id>O00505</id>
        <label>KPNA3</label>
    </interactant>
    <organismsDiffer>false</organismsDiffer>
    <experiments>3</experiments>
</comment>
<comment type="interaction">
    <interactant intactId="EBI-744471">
        <id>O43167</id>
    </interactant>
    <interactant intactId="EBI-10171697">
        <id>Q6A162</id>
        <label>KRT40</label>
    </interactant>
    <organismsDiffer>false</organismsDiffer>
    <experiments>3</experiments>
</comment>
<comment type="interaction">
    <interactant intactId="EBI-744471">
        <id>O43167</id>
    </interactant>
    <interactant intactId="EBI-10172150">
        <id>P60370</id>
        <label>KRTAP10-5</label>
    </interactant>
    <organismsDiffer>false</organismsDiffer>
    <experiments>3</experiments>
</comment>
<comment type="interaction">
    <interactant intactId="EBI-744471">
        <id>O43167</id>
    </interactant>
    <interactant intactId="EBI-12012928">
        <id>P60371</id>
        <label>KRTAP10-6</label>
    </interactant>
    <organismsDiffer>false</organismsDiffer>
    <experiments>3</experiments>
</comment>
<comment type="interaction">
    <interactant intactId="EBI-744471">
        <id>O43167</id>
    </interactant>
    <interactant intactId="EBI-10172290">
        <id>P60409</id>
        <label>KRTAP10-7</label>
    </interactant>
    <organismsDiffer>false</organismsDiffer>
    <experiments>3</experiments>
</comment>
<comment type="interaction">
    <interactant intactId="EBI-744471">
        <id>O43167</id>
    </interactant>
    <interactant intactId="EBI-10171774">
        <id>P60410</id>
        <label>KRTAP10-8</label>
    </interactant>
    <organismsDiffer>false</organismsDiffer>
    <experiments>6</experiments>
</comment>
<comment type="interaction">
    <interactant intactId="EBI-744471">
        <id>O43167</id>
    </interactant>
    <interactant intactId="EBI-10172052">
        <id>P60411</id>
        <label>KRTAP10-9</label>
    </interactant>
    <organismsDiffer>false</organismsDiffer>
    <experiments>3</experiments>
</comment>
<comment type="interaction">
    <interactant intactId="EBI-744471">
        <id>O43167</id>
    </interactant>
    <interactant intactId="EBI-14065470">
        <id>Q9BYR9</id>
        <label>KRTAP2-4</label>
    </interactant>
    <organismsDiffer>false</organismsDiffer>
    <experiments>3</experiments>
</comment>
<comment type="interaction">
    <interactant intactId="EBI-744471">
        <id>O43167</id>
    </interactant>
    <interactant intactId="EBI-10172511">
        <id>Q9BYR5</id>
        <label>KRTAP4-2</label>
    </interactant>
    <organismsDiffer>false</organismsDiffer>
    <experiments>3</experiments>
</comment>
<comment type="interaction">
    <interactant intactId="EBI-744471">
        <id>O43167</id>
    </interactant>
    <interactant intactId="EBI-3958099">
        <id>P26371</id>
        <label>KRTAP5-9</label>
    </interactant>
    <organismsDiffer>false</organismsDiffer>
    <experiments>3</experiments>
</comment>
<comment type="interaction">
    <interactant intactId="EBI-744471">
        <id>O43167</id>
    </interactant>
    <interactant intactId="EBI-740738">
        <id>O95751</id>
        <label>LDOC1</label>
    </interactant>
    <organismsDiffer>false</organismsDiffer>
    <experiments>7</experiments>
</comment>
<comment type="interaction">
    <interactant intactId="EBI-744471">
        <id>O43167</id>
    </interactant>
    <interactant intactId="EBI-8474075">
        <id>Q68G74</id>
        <label>LHX8</label>
    </interactant>
    <organismsDiffer>false</organismsDiffer>
    <experiments>3</experiments>
</comment>
<comment type="interaction">
    <interactant intactId="EBI-744471">
        <id>O43167</id>
    </interactant>
    <interactant intactId="EBI-739832">
        <id>Q8TBB1</id>
        <label>LNX1</label>
    </interactant>
    <organismsDiffer>false</organismsDiffer>
    <experiments>6</experiments>
</comment>
<comment type="interaction">
    <interactant intactId="EBI-744471">
        <id>O43167</id>
    </interactant>
    <interactant intactId="EBI-751373">
        <id>Q8N456</id>
        <label>LRRC18</label>
    </interactant>
    <organismsDiffer>false</organismsDiffer>
    <experiments>3</experiments>
</comment>
<comment type="interaction">
    <interactant intactId="EBI-744471">
        <id>O43167</id>
    </interactant>
    <interactant intactId="EBI-3954372">
        <id>D6RGH6</id>
        <label>MCIDAS</label>
    </interactant>
    <organismsDiffer>false</organismsDiffer>
    <experiments>3</experiments>
</comment>
<comment type="interaction">
    <interactant intactId="EBI-744471">
        <id>O43167</id>
    </interactant>
    <interactant intactId="EBI-724076">
        <id>Q99750</id>
        <label>MDFI</label>
    </interactant>
    <organismsDiffer>false</organismsDiffer>
    <experiments>11</experiments>
</comment>
<comment type="interaction">
    <interactant intactId="EBI-744471">
        <id>O43167</id>
    </interactant>
    <interactant intactId="EBI-10172526">
        <id>Q9UJV3-2</id>
        <label>MID2</label>
    </interactant>
    <organismsDiffer>false</organismsDiffer>
    <experiments>6</experiments>
</comment>
<comment type="interaction">
    <interactant intactId="EBI-744471">
        <id>O43167</id>
    </interactant>
    <interactant intactId="EBI-9640281">
        <id>Q5VU43-2</id>
        <label>PDE4DIP</label>
    </interactant>
    <organismsDiffer>false</organismsDiffer>
    <experiments>3</experiments>
</comment>
<comment type="interaction">
    <interactant intactId="EBI-744471">
        <id>O43167</id>
    </interactant>
    <interactant intactId="EBI-713786">
        <id>Q8IXK0</id>
        <label>PHC2</label>
    </interactant>
    <organismsDiffer>false</organismsDiffer>
    <experiments>3</experiments>
</comment>
<comment type="interaction">
    <interactant intactId="EBI-744471">
        <id>O43167</id>
    </interactant>
    <interactant intactId="EBI-79165">
        <id>Q9NRD5</id>
        <label>PICK1</label>
    </interactant>
    <organismsDiffer>false</organismsDiffer>
    <experiments>3</experiments>
</comment>
<comment type="interaction">
    <interactant intactId="EBI-744471">
        <id>O43167</id>
    </interactant>
    <interactant intactId="EBI-1389308">
        <id>Q7Z3K3</id>
        <label>POGZ</label>
    </interactant>
    <organismsDiffer>false</organismsDiffer>
    <experiments>8</experiments>
</comment>
<comment type="interaction">
    <interactant intactId="EBI-744471">
        <id>O43167</id>
    </interactant>
    <interactant intactId="EBI-12029004">
        <id>P78424</id>
        <label>POU6F2</label>
    </interactant>
    <organismsDiffer>false</organismsDiffer>
    <experiments>3</experiments>
</comment>
<comment type="interaction">
    <interactant intactId="EBI-744471">
        <id>O43167</id>
    </interactant>
    <interactant intactId="EBI-9512693">
        <id>Q53GL6</id>
        <label>RALY</label>
    </interactant>
    <organismsDiffer>false</organismsDiffer>
    <experiments>3</experiments>
</comment>
<comment type="interaction">
    <interactant intactId="EBI-744471">
        <id>O43167</id>
    </interactant>
    <interactant intactId="EBI-721525">
        <id>P98175</id>
        <label>RBM10</label>
    </interactant>
    <organismsDiffer>false</organismsDiffer>
    <experiments>3</experiments>
</comment>
<comment type="interaction">
    <interactant intactId="EBI-744471">
        <id>O43167</id>
    </interactant>
    <interactant intactId="EBI-12020542">
        <id>Q96LM5</id>
        <label>SPMIP2</label>
    </interactant>
    <organismsDiffer>false</organismsDiffer>
    <experiments>3</experiments>
</comment>
<comment type="interaction">
    <interactant intactId="EBI-744471">
        <id>O43167</id>
    </interactant>
    <interactant intactId="EBI-2212028">
        <id>Q9Y2D8</id>
        <label>SSX2IP</label>
    </interactant>
    <organismsDiffer>false</organismsDiffer>
    <experiments>3</experiments>
</comment>
<comment type="interaction">
    <interactant intactId="EBI-744471">
        <id>O43167</id>
    </interactant>
    <interactant intactId="EBI-717810">
        <id>Q08117</id>
        <label>TLE5</label>
    </interactant>
    <organismsDiffer>false</organismsDiffer>
    <experiments>3</experiments>
</comment>
<comment type="interaction">
    <interactant intactId="EBI-744471">
        <id>O43167</id>
    </interactant>
    <interactant intactId="EBI-11741437">
        <id>Q08117-2</id>
        <label>TLE5</label>
    </interactant>
    <organismsDiffer>false</organismsDiffer>
    <experiments>3</experiments>
</comment>
<comment type="interaction">
    <interactant intactId="EBI-744471">
        <id>O43167</id>
    </interactant>
    <interactant intactId="EBI-12155101">
        <id>Q9BTD3</id>
        <label>TMEM121</label>
    </interactant>
    <organismsDiffer>false</organismsDiffer>
    <experiments>3</experiments>
</comment>
<comment type="interaction">
    <interactant intactId="EBI-744471">
        <id>O43167</id>
    </interactant>
    <interactant intactId="EBI-355744">
        <id>Q12933</id>
        <label>TRAF2</label>
    </interactant>
    <organismsDiffer>false</organismsDiffer>
    <experiments>3</experiments>
</comment>
<comment type="interaction">
    <interactant intactId="EBI-744471">
        <id>O43167</id>
    </interactant>
    <interactant intactId="EBI-741602">
        <id>O94972</id>
        <label>TRIM37</label>
    </interactant>
    <organismsDiffer>false</organismsDiffer>
    <experiments>3</experiments>
</comment>
<comment type="interaction">
    <interactant intactId="EBI-744471">
        <id>O43167</id>
    </interactant>
    <interactant intactId="EBI-725997">
        <id>Q8WV44</id>
        <label>TRIM41</label>
    </interactant>
    <organismsDiffer>false</organismsDiffer>
    <experiments>6</experiments>
</comment>
<comment type="interaction">
    <interactant intactId="EBI-744471">
        <id>O43167</id>
    </interactant>
    <interactant intactId="EBI-739485">
        <id>Q9Y3Q8</id>
        <label>TSC22D4</label>
    </interactant>
    <organismsDiffer>false</organismsDiffer>
    <experiments>6</experiments>
</comment>
<comment type="interaction">
    <interactant intactId="EBI-744471">
        <id>O43167</id>
    </interactant>
    <interactant intactId="EBI-744794">
        <id>Q9BZW7</id>
        <label>TSGA10</label>
    </interactant>
    <organismsDiffer>false</organismsDiffer>
    <experiments>3</experiments>
</comment>
<comment type="interaction">
    <interactant intactId="EBI-744471">
        <id>O43167</id>
    </interactant>
    <interactant intactId="EBI-947459">
        <id>Q9H2G4</id>
        <label>TSPYL2</label>
    </interactant>
    <organismsDiffer>false</organismsDiffer>
    <experiments>3</experiments>
</comment>
<comment type="interaction">
    <interactant intactId="EBI-744471">
        <id>O43167</id>
    </interactant>
    <interactant intactId="EBI-740718">
        <id>O43298</id>
        <label>ZBTB43</label>
    </interactant>
    <organismsDiffer>false</organismsDiffer>
    <experiments>3</experiments>
</comment>
<comment type="interaction">
    <interactant intactId="EBI-744471">
        <id>O43167</id>
    </interactant>
    <interactant intactId="EBI-742740">
        <id>Q96BR9</id>
        <label>ZBTB8A</label>
    </interactant>
    <organismsDiffer>false</organismsDiffer>
    <experiments>6</experiments>
</comment>
<comment type="interaction">
    <interactant intactId="EBI-744471">
        <id>O43167</id>
    </interactant>
    <interactant intactId="EBI-395708">
        <id>Q96C00</id>
        <label>ZBTB9</label>
    </interactant>
    <organismsDiffer>false</organismsDiffer>
    <experiments>3</experiments>
</comment>
<comment type="interaction">
    <interactant intactId="EBI-744471">
        <id>O43167</id>
    </interactant>
    <interactant intactId="EBI-12949277">
        <id>O95789-4</id>
        <label>ZMYM6</label>
    </interactant>
    <organismsDiffer>false</organismsDiffer>
    <experiments>3</experiments>
</comment>
<comment type="interaction">
    <interactant intactId="EBI-744471">
        <id>O43167</id>
    </interactant>
    <interactant intactId="EBI-11035148">
        <id>Q8TF50</id>
        <label>ZNF526</label>
    </interactant>
    <organismsDiffer>false</organismsDiffer>
    <experiments>3</experiments>
</comment>
<comment type="interaction">
    <interactant intactId="EBI-744471">
        <id>O43167</id>
    </interactant>
    <interactant intactId="EBI-947476">
        <id>Q9UID6</id>
        <label>ZNF639</label>
    </interactant>
    <organismsDiffer>false</organismsDiffer>
    <experiments>3</experiments>
</comment>
<comment type="interaction">
    <interactant intactId="EBI-744471">
        <id>O43167</id>
    </interactant>
    <interactant intactId="EBI-7138235">
        <id>Q9NQZ8</id>
        <label>ZNF71</label>
    </interactant>
    <organismsDiffer>false</organismsDiffer>
    <experiments>5</experiments>
</comment>
<comment type="interaction">
    <interactant intactId="EBI-744471">
        <id>O43167</id>
    </interactant>
    <interactant intactId="EBI-10237274">
        <id>Q15937</id>
        <label>ZNF79</label>
    </interactant>
    <organismsDiffer>false</organismsDiffer>
    <experiments>3</experiments>
</comment>
<comment type="interaction">
    <interactant intactId="EBI-744471">
        <id>O43167</id>
    </interactant>
    <interactant intactId="EBI-10240849">
        <id>Q3KQV3</id>
        <label>ZNF792</label>
    </interactant>
    <organismsDiffer>false</organismsDiffer>
    <experiments>3</experiments>
</comment>
<comment type="interaction">
    <interactant intactId="EBI-744471">
        <id>O43167</id>
    </interactant>
    <interactant intactId="EBI-11962574">
        <id>Q96EG3</id>
        <label>ZNF837</label>
    </interactant>
    <organismsDiffer>false</organismsDiffer>
    <experiments>3</experiments>
</comment>
<comment type="interaction">
    <interactant intactId="EBI-744471">
        <id>O43167</id>
    </interactant>
    <interactant intactId="EBI-527853">
        <id>Q9UGI0</id>
        <label>ZRANB1</label>
    </interactant>
    <organismsDiffer>false</organismsDiffer>
    <experiments>3</experiments>
</comment>
<comment type="interaction">
    <interactant intactId="EBI-25842419">
        <id>O43167-2</id>
    </interactant>
    <interactant intactId="EBI-10976677">
        <id>G5E9A7</id>
        <label>DMWD</label>
    </interactant>
    <organismsDiffer>false</organismsDiffer>
    <experiments>3</experiments>
</comment>
<comment type="interaction">
    <interactant intactId="EBI-25842419">
        <id>O43167-2</id>
    </interactant>
    <interactant intactId="EBI-747754">
        <id>P28799</id>
        <label>GRN</label>
    </interactant>
    <organismsDiffer>false</organismsDiffer>
    <experiments>3</experiments>
</comment>
<comment type="interaction">
    <interactant intactId="EBI-25842419">
        <id>O43167-2</id>
    </interactant>
    <interactant intactId="EBI-466029">
        <id>P42858</id>
        <label>HTT</label>
    </interactant>
    <organismsDiffer>false</organismsDiffer>
    <experiments>9</experiments>
</comment>
<comment type="interaction">
    <interactant intactId="EBI-25842419">
        <id>O43167-2</id>
    </interactant>
    <interactant intactId="EBI-10975473">
        <id>O60333-2</id>
        <label>KIF1B</label>
    </interactant>
    <organismsDiffer>false</organismsDiffer>
    <experiments>3</experiments>
</comment>
<comment type="interaction">
    <interactant intactId="EBI-25842419">
        <id>O43167-2</id>
    </interactant>
    <interactant intactId="EBI-21251460">
        <id>O60260-5</id>
        <label>PRKN</label>
    </interactant>
    <organismsDiffer>false</organismsDiffer>
    <experiments>3</experiments>
</comment>
<comment type="interaction">
    <interactant intactId="EBI-25842419">
        <id>O43167-2</id>
    </interactant>
    <interactant intactId="EBI-396669">
        <id>Q9Y3C5</id>
        <label>RNF11</label>
    </interactant>
    <organismsDiffer>false</organismsDiffer>
    <experiments>3</experiments>
</comment>
<comment type="interaction">
    <interactant intactId="EBI-25842419">
        <id>O43167-2</id>
    </interactant>
    <interactant intactId="EBI-985879">
        <id>P37840</id>
        <label>SNCA</label>
    </interactant>
    <organismsDiffer>false</organismsDiffer>
    <experiments>3</experiments>
</comment>
<comment type="interaction">
    <interactant intactId="EBI-25842419">
        <id>O43167-2</id>
    </interactant>
    <interactant intactId="EBI-5235340">
        <id>Q7Z699</id>
        <label>SPRED1</label>
    </interactant>
    <organismsDiffer>false</organismsDiffer>
    <experiments>3</experiments>
</comment>
<comment type="interaction">
    <interactant intactId="EBI-25842419">
        <id>O43167-2</id>
    </interactant>
    <interactant intactId="EBI-372899">
        <id>Q13148</id>
        <label>TARDBP</label>
    </interactant>
    <organismsDiffer>false</organismsDiffer>
    <experiments>3</experiments>
</comment>
<comment type="interaction">
    <interactant intactId="EBI-25842419">
        <id>O43167-2</id>
    </interactant>
    <interactant intactId="EBI-12806590">
        <id>Q86WV8</id>
        <label>TSC1</label>
    </interactant>
    <organismsDiffer>false</organismsDiffer>
    <experiments>3</experiments>
</comment>
<comment type="interaction">
    <interactant intactId="EBI-25842419">
        <id>O43167-2</id>
    </interactant>
    <interactant intactId="EBI-720609">
        <id>O76024</id>
        <label>WFS1</label>
    </interactant>
    <organismsDiffer>false</organismsDiffer>
    <experiments>3</experiments>
</comment>
<comment type="subcellular location">
    <subcellularLocation>
        <location evidence="8">Nucleus</location>
    </subcellularLocation>
</comment>
<comment type="alternative products">
    <event type="alternative splicing"/>
    <isoform>
        <id>O43167-1</id>
        <name>1</name>
        <sequence type="displayed"/>
    </isoform>
    <isoform>
        <id>O43167-2</id>
        <name>2</name>
        <sequence type="described" ref="VSP_016221 VSP_016222"/>
    </isoform>
</comment>
<comment type="tissue specificity">
    <text evidence="5">Widely expressed, with highest levels in naive B-cells.</text>
</comment>
<comment type="developmental stage">
    <text evidence="5">Regulated expression during B-cell differentiation. Low expression in pro-B cells, pre-B I cells and large pre-B II cells. Levels peak in small pre-B II and then slightly decrease in immature B-cells. Low levels in CD34+ umbilical cord blood cells.</text>
</comment>
<comment type="disease" evidence="5">
    <disease id="DI-03138">
        <name>Immunodeficiency-centromeric instability-facial anomalies syndrome 2</name>
        <acronym>ICF2</acronym>
        <description>A rare disorder characterized by a variable immunodeficiency resulting in recurrent infections, facial anomalies, and branching of chromosomes 1, 9, and 16. Other variable symptoms include growth retardation, failure to thrive, and psychomotor retardation. Laboratory studies show limited hypomethylation of DNA in a small fraction of the genome in some, but not all, patients.</description>
        <dbReference type="MIM" id="614069"/>
    </disease>
    <text>The disease is caused by variants affecting the gene represented in this entry.</text>
</comment>
<comment type="similarity">
    <text evidence="8">Belongs to the krueppel C2H2-type zinc-finger protein family.</text>
</comment>
<comment type="sequence caution" evidence="8">
    <conflict type="erroneous initiation">
        <sequence resource="EMBL-CDS" id="BAA23713"/>
    </conflict>
    <text>Extended N-terminus.</text>
</comment>
<gene>
    <name type="primary">ZBTB24</name>
    <name type="synonym">KIAA0441</name>
    <name type="synonym">ZNF450</name>
</gene>
<proteinExistence type="evidence at protein level"/>